<gene>
    <name evidence="1" type="primary">rpsU3</name>
    <name type="ordered locus">FTF1038c</name>
</gene>
<feature type="chain" id="PRO_0000266679" description="Small ribosomal subunit protein bS21C">
    <location>
        <begin position="1"/>
        <end position="65"/>
    </location>
</feature>
<name>RS213_FRAT1</name>
<evidence type="ECO:0000255" key="1">
    <source>
        <dbReference type="HAMAP-Rule" id="MF_00358"/>
    </source>
</evidence>
<evidence type="ECO:0000305" key="2"/>
<keyword id="KW-0687">Ribonucleoprotein</keyword>
<keyword id="KW-0689">Ribosomal protein</keyword>
<comment type="similarity">
    <text evidence="1">Belongs to the bacterial ribosomal protein bS21 family.</text>
</comment>
<organism>
    <name type="scientific">Francisella tularensis subsp. tularensis (strain FSC 198)</name>
    <dbReference type="NCBI Taxonomy" id="393115"/>
    <lineage>
        <taxon>Bacteria</taxon>
        <taxon>Pseudomonadati</taxon>
        <taxon>Pseudomonadota</taxon>
        <taxon>Gammaproteobacteria</taxon>
        <taxon>Thiotrichales</taxon>
        <taxon>Francisellaceae</taxon>
        <taxon>Francisella</taxon>
    </lineage>
</organism>
<proteinExistence type="inferred from homology"/>
<protein>
    <recommendedName>
        <fullName evidence="1">Small ribosomal subunit protein bS21C</fullName>
    </recommendedName>
    <alternativeName>
        <fullName evidence="2">30S ribosomal protein S21 3</fullName>
    </alternativeName>
</protein>
<reference key="1">
    <citation type="journal article" date="2007" name="PLoS ONE">
        <title>Genome sequencing shows that European isolates of Francisella tularensis subspecies tularensis are almost identical to US laboratory strain Schu S4.</title>
        <authorList>
            <person name="Chaudhuri R.R."/>
            <person name="Ren C.-P."/>
            <person name="Desmond L."/>
            <person name="Vincent G.A."/>
            <person name="Silman N.J."/>
            <person name="Brehm J.K."/>
            <person name="Elmore M.J."/>
            <person name="Hudson M.J."/>
            <person name="Forsman M."/>
            <person name="Isherwood K.E."/>
            <person name="Gurycova D."/>
            <person name="Minton N.P."/>
            <person name="Titball R.W."/>
            <person name="Pallen M.J."/>
            <person name="Vipond R."/>
        </authorList>
    </citation>
    <scope>NUCLEOTIDE SEQUENCE [LARGE SCALE GENOMIC DNA]</scope>
    <source>
        <strain>FSC 198</strain>
    </source>
</reference>
<dbReference type="EMBL" id="AM286280">
    <property type="protein sequence ID" value="CAL09054.1"/>
    <property type="molecule type" value="Genomic_DNA"/>
</dbReference>
<dbReference type="SMR" id="Q14HH3"/>
<dbReference type="KEGG" id="ftf:FTF1038c"/>
<dbReference type="HOGENOM" id="CLU_159258_1_2_6"/>
<dbReference type="GO" id="GO:1990904">
    <property type="term" value="C:ribonucleoprotein complex"/>
    <property type="evidence" value="ECO:0007669"/>
    <property type="project" value="UniProtKB-KW"/>
</dbReference>
<dbReference type="GO" id="GO:0005840">
    <property type="term" value="C:ribosome"/>
    <property type="evidence" value="ECO:0007669"/>
    <property type="project" value="UniProtKB-KW"/>
</dbReference>
<dbReference type="GO" id="GO:0003735">
    <property type="term" value="F:structural constituent of ribosome"/>
    <property type="evidence" value="ECO:0007669"/>
    <property type="project" value="InterPro"/>
</dbReference>
<dbReference type="GO" id="GO:0006412">
    <property type="term" value="P:translation"/>
    <property type="evidence" value="ECO:0007669"/>
    <property type="project" value="UniProtKB-UniRule"/>
</dbReference>
<dbReference type="Gene3D" id="1.20.5.1150">
    <property type="entry name" value="Ribosomal protein S8"/>
    <property type="match status" value="1"/>
</dbReference>
<dbReference type="HAMAP" id="MF_00358">
    <property type="entry name" value="Ribosomal_bS21"/>
    <property type="match status" value="1"/>
</dbReference>
<dbReference type="InterPro" id="IPR001911">
    <property type="entry name" value="Ribosomal_bS21"/>
</dbReference>
<dbReference type="InterPro" id="IPR018278">
    <property type="entry name" value="Ribosomal_bS21_CS"/>
</dbReference>
<dbReference type="InterPro" id="IPR038380">
    <property type="entry name" value="Ribosomal_bS21_sf"/>
</dbReference>
<dbReference type="NCBIfam" id="TIGR00030">
    <property type="entry name" value="S21p"/>
    <property type="match status" value="1"/>
</dbReference>
<dbReference type="PANTHER" id="PTHR21109">
    <property type="entry name" value="MITOCHONDRIAL 28S RIBOSOMAL PROTEIN S21"/>
    <property type="match status" value="1"/>
</dbReference>
<dbReference type="PANTHER" id="PTHR21109:SF22">
    <property type="entry name" value="SMALL RIBOSOMAL SUBUNIT PROTEIN BS21"/>
    <property type="match status" value="1"/>
</dbReference>
<dbReference type="Pfam" id="PF01165">
    <property type="entry name" value="Ribosomal_S21"/>
    <property type="match status" value="1"/>
</dbReference>
<dbReference type="PRINTS" id="PR00976">
    <property type="entry name" value="RIBOSOMALS21"/>
</dbReference>
<dbReference type="PROSITE" id="PS01181">
    <property type="entry name" value="RIBOSOMAL_S21"/>
    <property type="match status" value="1"/>
</dbReference>
<sequence length="65" mass="7840">MPSVRIKEREPFDVALRRFKRSCEKAGIVSELRRREYFEKPTWARKRKKTAAVKRAHKSNIIVKR</sequence>
<accession>Q14HH3</accession>